<sequence length="437" mass="46110">MTPNTDLNIPLFERAKALIPGGVNSPVRAFKAVGGTPRFVKRARGAYFWDANDQRFIDYIGSWGPMILGHGHPAVLEAVQQAALEGLSFGAPTERELELAEAILRLLPSMQMIRLVSSGTEAGMSAIRLARGATGRSKLIKFEGCYHGHADALLVKAGSGLATFGNATSAGVPAEVVQHTLVLEYNSIEQLERAFALHGKELACLIIEPIAGNMNLVRASVPFMRRCRELCSEYGALLVLDEVMTGFRVAPGGAQSLYARDIPGFQPDLTVLGKVIGGGMPLAAFGGSRALMEHLAPLGAVYQAGTLSGNPVATACGLATLRAIGQPGFFAALSARTRALVEGLRGAAAAEGVAFSADSEGGMFGFFLLPALPRNYAQVLQTDSARFNQLFHGLLERGIYIAPALYEAGFVSAAHSDEDIAATVAAAREVFKTLAKP</sequence>
<name>GSA_VEREI</name>
<dbReference type="EC" id="5.4.3.8" evidence="1"/>
<dbReference type="EMBL" id="CP000542">
    <property type="protein sequence ID" value="ABM58757.1"/>
    <property type="molecule type" value="Genomic_DNA"/>
</dbReference>
<dbReference type="RefSeq" id="WP_011810752.1">
    <property type="nucleotide sequence ID" value="NC_008786.1"/>
</dbReference>
<dbReference type="SMR" id="A1WMA0"/>
<dbReference type="STRING" id="391735.Veis_3024"/>
<dbReference type="GeneID" id="76461493"/>
<dbReference type="KEGG" id="vei:Veis_3024"/>
<dbReference type="eggNOG" id="COG0001">
    <property type="taxonomic scope" value="Bacteria"/>
</dbReference>
<dbReference type="HOGENOM" id="CLU_016922_1_5_4"/>
<dbReference type="OrthoDB" id="3398487at2"/>
<dbReference type="UniPathway" id="UPA00251">
    <property type="reaction ID" value="UER00317"/>
</dbReference>
<dbReference type="Proteomes" id="UP000000374">
    <property type="component" value="Chromosome"/>
</dbReference>
<dbReference type="GO" id="GO:0005737">
    <property type="term" value="C:cytoplasm"/>
    <property type="evidence" value="ECO:0007669"/>
    <property type="project" value="UniProtKB-SubCell"/>
</dbReference>
<dbReference type="GO" id="GO:0042286">
    <property type="term" value="F:glutamate-1-semialdehyde 2,1-aminomutase activity"/>
    <property type="evidence" value="ECO:0007669"/>
    <property type="project" value="UniProtKB-UniRule"/>
</dbReference>
<dbReference type="GO" id="GO:0030170">
    <property type="term" value="F:pyridoxal phosphate binding"/>
    <property type="evidence" value="ECO:0007669"/>
    <property type="project" value="InterPro"/>
</dbReference>
<dbReference type="GO" id="GO:0008483">
    <property type="term" value="F:transaminase activity"/>
    <property type="evidence" value="ECO:0007669"/>
    <property type="project" value="InterPro"/>
</dbReference>
<dbReference type="GO" id="GO:0006782">
    <property type="term" value="P:protoporphyrinogen IX biosynthetic process"/>
    <property type="evidence" value="ECO:0007669"/>
    <property type="project" value="UniProtKB-UniRule"/>
</dbReference>
<dbReference type="CDD" id="cd00610">
    <property type="entry name" value="OAT_like"/>
    <property type="match status" value="1"/>
</dbReference>
<dbReference type="FunFam" id="3.40.640.10:FF:000021">
    <property type="entry name" value="Glutamate-1-semialdehyde 2,1-aminomutase"/>
    <property type="match status" value="1"/>
</dbReference>
<dbReference type="Gene3D" id="3.90.1150.10">
    <property type="entry name" value="Aspartate Aminotransferase, domain 1"/>
    <property type="match status" value="1"/>
</dbReference>
<dbReference type="Gene3D" id="3.40.640.10">
    <property type="entry name" value="Type I PLP-dependent aspartate aminotransferase-like (Major domain)"/>
    <property type="match status" value="1"/>
</dbReference>
<dbReference type="HAMAP" id="MF_00375">
    <property type="entry name" value="HemL_aminotrans_3"/>
    <property type="match status" value="1"/>
</dbReference>
<dbReference type="InterPro" id="IPR004639">
    <property type="entry name" value="4pyrrol_synth_GluAld_NH2Trfase"/>
</dbReference>
<dbReference type="InterPro" id="IPR005814">
    <property type="entry name" value="Aminotrans_3"/>
</dbReference>
<dbReference type="InterPro" id="IPR015424">
    <property type="entry name" value="PyrdxlP-dep_Trfase"/>
</dbReference>
<dbReference type="InterPro" id="IPR015421">
    <property type="entry name" value="PyrdxlP-dep_Trfase_major"/>
</dbReference>
<dbReference type="InterPro" id="IPR015422">
    <property type="entry name" value="PyrdxlP-dep_Trfase_small"/>
</dbReference>
<dbReference type="NCBIfam" id="TIGR00713">
    <property type="entry name" value="hemL"/>
    <property type="match status" value="1"/>
</dbReference>
<dbReference type="NCBIfam" id="NF000818">
    <property type="entry name" value="PRK00062.1"/>
    <property type="match status" value="1"/>
</dbReference>
<dbReference type="PANTHER" id="PTHR43713">
    <property type="entry name" value="GLUTAMATE-1-SEMIALDEHYDE 2,1-AMINOMUTASE"/>
    <property type="match status" value="1"/>
</dbReference>
<dbReference type="PANTHER" id="PTHR43713:SF3">
    <property type="entry name" value="GLUTAMATE-1-SEMIALDEHYDE 2,1-AMINOMUTASE 1, CHLOROPLASTIC-RELATED"/>
    <property type="match status" value="1"/>
</dbReference>
<dbReference type="Pfam" id="PF00202">
    <property type="entry name" value="Aminotran_3"/>
    <property type="match status" value="1"/>
</dbReference>
<dbReference type="SUPFAM" id="SSF53383">
    <property type="entry name" value="PLP-dependent transferases"/>
    <property type="match status" value="1"/>
</dbReference>
<keyword id="KW-0963">Cytoplasm</keyword>
<keyword id="KW-0413">Isomerase</keyword>
<keyword id="KW-0627">Porphyrin biosynthesis</keyword>
<keyword id="KW-0663">Pyridoxal phosphate</keyword>
<keyword id="KW-1185">Reference proteome</keyword>
<accession>A1WMA0</accession>
<gene>
    <name evidence="1" type="primary">hemL</name>
    <name type="ordered locus">Veis_3024</name>
</gene>
<evidence type="ECO:0000255" key="1">
    <source>
        <dbReference type="HAMAP-Rule" id="MF_00375"/>
    </source>
</evidence>
<organism>
    <name type="scientific">Verminephrobacter eiseniae (strain EF01-2)</name>
    <dbReference type="NCBI Taxonomy" id="391735"/>
    <lineage>
        <taxon>Bacteria</taxon>
        <taxon>Pseudomonadati</taxon>
        <taxon>Pseudomonadota</taxon>
        <taxon>Betaproteobacteria</taxon>
        <taxon>Burkholderiales</taxon>
        <taxon>Comamonadaceae</taxon>
        <taxon>Verminephrobacter</taxon>
    </lineage>
</organism>
<comment type="catalytic activity">
    <reaction evidence="1">
        <text>(S)-4-amino-5-oxopentanoate = 5-aminolevulinate</text>
        <dbReference type="Rhea" id="RHEA:14265"/>
        <dbReference type="ChEBI" id="CHEBI:57501"/>
        <dbReference type="ChEBI" id="CHEBI:356416"/>
        <dbReference type="EC" id="5.4.3.8"/>
    </reaction>
</comment>
<comment type="cofactor">
    <cofactor evidence="1">
        <name>pyridoxal 5'-phosphate</name>
        <dbReference type="ChEBI" id="CHEBI:597326"/>
    </cofactor>
</comment>
<comment type="pathway">
    <text evidence="1">Porphyrin-containing compound metabolism; protoporphyrin-IX biosynthesis; 5-aminolevulinate from L-glutamyl-tRNA(Glu): step 2/2.</text>
</comment>
<comment type="subunit">
    <text evidence="1">Homodimer.</text>
</comment>
<comment type="subcellular location">
    <subcellularLocation>
        <location evidence="1">Cytoplasm</location>
    </subcellularLocation>
</comment>
<comment type="similarity">
    <text evidence="1">Belongs to the class-III pyridoxal-phosphate-dependent aminotransferase family. HemL subfamily.</text>
</comment>
<protein>
    <recommendedName>
        <fullName evidence="1">Glutamate-1-semialdehyde 2,1-aminomutase</fullName>
        <shortName evidence="1">GSA</shortName>
        <ecNumber evidence="1">5.4.3.8</ecNumber>
    </recommendedName>
    <alternativeName>
        <fullName evidence="1">Glutamate-1-semialdehyde aminotransferase</fullName>
        <shortName evidence="1">GSA-AT</shortName>
    </alternativeName>
</protein>
<reference key="1">
    <citation type="submission" date="2006-12" db="EMBL/GenBank/DDBJ databases">
        <title>Complete sequence of chromosome 1 of Verminephrobacter eiseniae EF01-2.</title>
        <authorList>
            <person name="Copeland A."/>
            <person name="Lucas S."/>
            <person name="Lapidus A."/>
            <person name="Barry K."/>
            <person name="Detter J.C."/>
            <person name="Glavina del Rio T."/>
            <person name="Dalin E."/>
            <person name="Tice H."/>
            <person name="Pitluck S."/>
            <person name="Chertkov O."/>
            <person name="Brettin T."/>
            <person name="Bruce D."/>
            <person name="Han C."/>
            <person name="Tapia R."/>
            <person name="Gilna P."/>
            <person name="Schmutz J."/>
            <person name="Larimer F."/>
            <person name="Land M."/>
            <person name="Hauser L."/>
            <person name="Kyrpides N."/>
            <person name="Kim E."/>
            <person name="Stahl D."/>
            <person name="Richardson P."/>
        </authorList>
    </citation>
    <scope>NUCLEOTIDE SEQUENCE [LARGE SCALE GENOMIC DNA]</scope>
    <source>
        <strain>EF01-2</strain>
    </source>
</reference>
<feature type="chain" id="PRO_0000300957" description="Glutamate-1-semialdehyde 2,1-aminomutase">
    <location>
        <begin position="1"/>
        <end position="437"/>
    </location>
</feature>
<feature type="modified residue" description="N6-(pyridoxal phosphate)lysine" evidence="1">
    <location>
        <position position="274"/>
    </location>
</feature>
<proteinExistence type="inferred from homology"/>